<comment type="function">
    <text evidence="2">Required for mobilization of iron from the bacterioferritin (BFR) complex (By similarity).</text>
</comment>
<comment type="cofactor">
    <cofactor evidence="2">
        <name>[2Fe-2S] cluster</name>
        <dbReference type="ChEBI" id="CHEBI:190135"/>
    </cofactor>
    <text evidence="1 2">Binds 1 [2Fe-2S] cluster.</text>
</comment>
<comment type="subunit">
    <text evidence="2">Monomer (By similarity). Interacts with bacterioferritin (BFR); up to 12 Bfd proteins can bind to the BFR (By similarity).</text>
</comment>
<comment type="similarity">
    <text evidence="3">Belongs to the Bfd family.</text>
</comment>
<gene>
    <name type="primary">bfd</name>
    <name type="ordered locus">STY4354</name>
    <name type="ordered locus">t4061</name>
</gene>
<protein>
    <recommendedName>
        <fullName>Bacterioferritin-associated ferredoxin</fullName>
    </recommendedName>
</protein>
<feature type="chain" id="PRO_0000064916" description="Bacterioferritin-associated ferredoxin">
    <location>
        <begin position="1"/>
        <end position="64"/>
    </location>
</feature>
<feature type="binding site" evidence="2">
    <location>
        <position position="4"/>
    </location>
    <ligand>
        <name>[2Fe-2S] cluster</name>
        <dbReference type="ChEBI" id="CHEBI:190135"/>
    </ligand>
</feature>
<feature type="binding site" evidence="2">
    <location>
        <position position="6"/>
    </location>
    <ligand>
        <name>[2Fe-2S] cluster</name>
        <dbReference type="ChEBI" id="CHEBI:190135"/>
    </ligand>
</feature>
<feature type="binding site" evidence="2">
    <location>
        <position position="39"/>
    </location>
    <ligand>
        <name>[2Fe-2S] cluster</name>
        <dbReference type="ChEBI" id="CHEBI:190135"/>
    </ligand>
</feature>
<feature type="binding site" evidence="2">
    <location>
        <position position="42"/>
    </location>
    <ligand>
        <name>[2Fe-2S] cluster</name>
        <dbReference type="ChEBI" id="CHEBI:190135"/>
    </ligand>
</feature>
<proteinExistence type="inferred from homology"/>
<sequence>MYVCLCNGISDKKIRQAVRQFHPQSFQQLRKFIPVGNQCGKCIRAAREVMQDELTQMPEFKEIA</sequence>
<organism>
    <name type="scientific">Salmonella typhi</name>
    <dbReference type="NCBI Taxonomy" id="90370"/>
    <lineage>
        <taxon>Bacteria</taxon>
        <taxon>Pseudomonadati</taxon>
        <taxon>Pseudomonadota</taxon>
        <taxon>Gammaproteobacteria</taxon>
        <taxon>Enterobacterales</taxon>
        <taxon>Enterobacteriaceae</taxon>
        <taxon>Salmonella</taxon>
    </lineage>
</organism>
<evidence type="ECO:0000250" key="1"/>
<evidence type="ECO:0000250" key="2">
    <source>
        <dbReference type="UniProtKB" id="Q9HY80"/>
    </source>
</evidence>
<evidence type="ECO:0000305" key="3"/>
<name>BFD_SALTI</name>
<accession>P0A1Z7</accession>
<accession>O68925</accession>
<dbReference type="EMBL" id="AL513382">
    <property type="protein sequence ID" value="CAD08169.1"/>
    <property type="molecule type" value="Genomic_DNA"/>
</dbReference>
<dbReference type="EMBL" id="AE014613">
    <property type="protein sequence ID" value="AAO71528.1"/>
    <property type="molecule type" value="Genomic_DNA"/>
</dbReference>
<dbReference type="RefSeq" id="NP_458456.1">
    <property type="nucleotide sequence ID" value="NC_003198.1"/>
</dbReference>
<dbReference type="RefSeq" id="WP_000289082.1">
    <property type="nucleotide sequence ID" value="NZ_WSUR01000046.1"/>
</dbReference>
<dbReference type="SMR" id="P0A1Z7"/>
<dbReference type="STRING" id="220341.gene:17588182"/>
<dbReference type="KEGG" id="stt:t4061"/>
<dbReference type="KEGG" id="sty:STY4354"/>
<dbReference type="PATRIC" id="fig|220341.7.peg.4450"/>
<dbReference type="eggNOG" id="COG2906">
    <property type="taxonomic scope" value="Bacteria"/>
</dbReference>
<dbReference type="HOGENOM" id="CLU_159205_3_4_6"/>
<dbReference type="OMA" id="CLCTGVT"/>
<dbReference type="OrthoDB" id="9815350at2"/>
<dbReference type="Proteomes" id="UP000000541">
    <property type="component" value="Chromosome"/>
</dbReference>
<dbReference type="Proteomes" id="UP000002670">
    <property type="component" value="Chromosome"/>
</dbReference>
<dbReference type="GO" id="GO:0051537">
    <property type="term" value="F:2 iron, 2 sulfur cluster binding"/>
    <property type="evidence" value="ECO:0007669"/>
    <property type="project" value="UniProtKB-KW"/>
</dbReference>
<dbReference type="GO" id="GO:0046872">
    <property type="term" value="F:metal ion binding"/>
    <property type="evidence" value="ECO:0007669"/>
    <property type="project" value="UniProtKB-KW"/>
</dbReference>
<dbReference type="CDD" id="cd19945">
    <property type="entry name" value="Fer2_BFD"/>
    <property type="match status" value="1"/>
</dbReference>
<dbReference type="FunFam" id="1.10.10.1100:FF:000001">
    <property type="entry name" value="Bacterioferritin-associated ferredoxin"/>
    <property type="match status" value="1"/>
</dbReference>
<dbReference type="Gene3D" id="1.10.10.1100">
    <property type="entry name" value="BFD-like [2Fe-2S]-binding domain"/>
    <property type="match status" value="1"/>
</dbReference>
<dbReference type="InterPro" id="IPR052371">
    <property type="entry name" value="BFD-associated_ferredoxin"/>
</dbReference>
<dbReference type="InterPro" id="IPR007419">
    <property type="entry name" value="BFD-like_2Fe2S-bd_dom"/>
</dbReference>
<dbReference type="InterPro" id="IPR041854">
    <property type="entry name" value="BFD-like_2Fe2S-bd_dom_sf"/>
</dbReference>
<dbReference type="NCBIfam" id="NF007803">
    <property type="entry name" value="PRK10509.1"/>
    <property type="match status" value="1"/>
</dbReference>
<dbReference type="PANTHER" id="PTHR37424">
    <property type="entry name" value="BACTERIOFERRITIN-ASSOCIATED FERREDOXIN"/>
    <property type="match status" value="1"/>
</dbReference>
<dbReference type="PANTHER" id="PTHR37424:SF1">
    <property type="entry name" value="BACTERIOFERRITIN-ASSOCIATED FERREDOXIN"/>
    <property type="match status" value="1"/>
</dbReference>
<dbReference type="Pfam" id="PF04324">
    <property type="entry name" value="Fer2_BFD"/>
    <property type="match status" value="1"/>
</dbReference>
<keyword id="KW-0001">2Fe-2S</keyword>
<keyword id="KW-0249">Electron transport</keyword>
<keyword id="KW-0408">Iron</keyword>
<keyword id="KW-0411">Iron-sulfur</keyword>
<keyword id="KW-0479">Metal-binding</keyword>
<keyword id="KW-0813">Transport</keyword>
<reference key="1">
    <citation type="journal article" date="2001" name="Nature">
        <title>Complete genome sequence of a multiple drug resistant Salmonella enterica serovar Typhi CT18.</title>
        <authorList>
            <person name="Parkhill J."/>
            <person name="Dougan G."/>
            <person name="James K.D."/>
            <person name="Thomson N.R."/>
            <person name="Pickard D."/>
            <person name="Wain J."/>
            <person name="Churcher C.M."/>
            <person name="Mungall K.L."/>
            <person name="Bentley S.D."/>
            <person name="Holden M.T.G."/>
            <person name="Sebaihia M."/>
            <person name="Baker S."/>
            <person name="Basham D."/>
            <person name="Brooks K."/>
            <person name="Chillingworth T."/>
            <person name="Connerton P."/>
            <person name="Cronin A."/>
            <person name="Davis P."/>
            <person name="Davies R.M."/>
            <person name="Dowd L."/>
            <person name="White N."/>
            <person name="Farrar J."/>
            <person name="Feltwell T."/>
            <person name="Hamlin N."/>
            <person name="Haque A."/>
            <person name="Hien T.T."/>
            <person name="Holroyd S."/>
            <person name="Jagels K."/>
            <person name="Krogh A."/>
            <person name="Larsen T.S."/>
            <person name="Leather S."/>
            <person name="Moule S."/>
            <person name="O'Gaora P."/>
            <person name="Parry C."/>
            <person name="Quail M.A."/>
            <person name="Rutherford K.M."/>
            <person name="Simmonds M."/>
            <person name="Skelton J."/>
            <person name="Stevens K."/>
            <person name="Whitehead S."/>
            <person name="Barrell B.G."/>
        </authorList>
    </citation>
    <scope>NUCLEOTIDE SEQUENCE [LARGE SCALE GENOMIC DNA]</scope>
    <source>
        <strain>CT18</strain>
    </source>
</reference>
<reference key="2">
    <citation type="journal article" date="2003" name="J. Bacteriol.">
        <title>Comparative genomics of Salmonella enterica serovar Typhi strains Ty2 and CT18.</title>
        <authorList>
            <person name="Deng W."/>
            <person name="Liou S.-R."/>
            <person name="Plunkett G. III"/>
            <person name="Mayhew G.F."/>
            <person name="Rose D.J."/>
            <person name="Burland V."/>
            <person name="Kodoyianni V."/>
            <person name="Schwartz D.C."/>
            <person name="Blattner F.R."/>
        </authorList>
    </citation>
    <scope>NUCLEOTIDE SEQUENCE [LARGE SCALE GENOMIC DNA]</scope>
    <source>
        <strain>ATCC 700931 / Ty2</strain>
    </source>
</reference>